<proteinExistence type="inferred from homology"/>
<comment type="similarity">
    <text evidence="1">Belongs to the eukaryotic ribosomal protein eS1 family.</text>
</comment>
<organism>
    <name type="scientific">Methanococcus maripaludis (strain C6 / ATCC BAA-1332)</name>
    <dbReference type="NCBI Taxonomy" id="444158"/>
    <lineage>
        <taxon>Archaea</taxon>
        <taxon>Methanobacteriati</taxon>
        <taxon>Methanobacteriota</taxon>
        <taxon>Methanomada group</taxon>
        <taxon>Methanococci</taxon>
        <taxon>Methanococcales</taxon>
        <taxon>Methanococcaceae</taxon>
        <taxon>Methanococcus</taxon>
    </lineage>
</organism>
<evidence type="ECO:0000255" key="1">
    <source>
        <dbReference type="HAMAP-Rule" id="MF_00359"/>
    </source>
</evidence>
<evidence type="ECO:0000305" key="2"/>
<protein>
    <recommendedName>
        <fullName evidence="1">Small ribosomal subunit protein eS1</fullName>
    </recommendedName>
    <alternativeName>
        <fullName evidence="2">30S ribosomal protein S3Ae</fullName>
    </alternativeName>
    <alternativeName>
        <fullName evidence="1">Ribosomal protein S1e</fullName>
    </alternativeName>
</protein>
<gene>
    <name evidence="1" type="primary">rps3ae</name>
    <name type="ordered locus">MmarC6_0217</name>
</gene>
<accession>A9A7B4</accession>
<sequence length="225" mass="25347">MARMKARSAKGKRVAKDTWKSKVWYDIYTPQSFGGDVIGQTPANDPATLIGRISEISLRDLTNEHSKHMTRMYFKVDGVSGNNATSQFVGHDTTREYLKSQVRRRRSKINAIVDVRTKDGFKLRVKALVLTAVRARDHHKTEIRVKMEQIIKDMAKETAFAEFVHAMLMGGLGSKIYGDCKKMFPLKRVEIFKSEVLEFGKAVEAPVEEAAAEEVAEAPVAETQE</sequence>
<name>RS3A_METM6</name>
<reference key="1">
    <citation type="submission" date="2007-10" db="EMBL/GenBank/DDBJ databases">
        <title>Complete sequence of Methanococcus maripaludis C6.</title>
        <authorList>
            <consortium name="US DOE Joint Genome Institute"/>
            <person name="Copeland A."/>
            <person name="Lucas S."/>
            <person name="Lapidus A."/>
            <person name="Barry K."/>
            <person name="Glavina del Rio T."/>
            <person name="Dalin E."/>
            <person name="Tice H."/>
            <person name="Pitluck S."/>
            <person name="Clum A."/>
            <person name="Schmutz J."/>
            <person name="Larimer F."/>
            <person name="Land M."/>
            <person name="Hauser L."/>
            <person name="Kyrpides N."/>
            <person name="Mikhailova N."/>
            <person name="Sieprawska-Lupa M."/>
            <person name="Whitman W.B."/>
            <person name="Richardson P."/>
        </authorList>
    </citation>
    <scope>NUCLEOTIDE SEQUENCE [LARGE SCALE GENOMIC DNA]</scope>
    <source>
        <strain>C6 / ATCC BAA-1332</strain>
    </source>
</reference>
<dbReference type="EMBL" id="CP000867">
    <property type="protein sequence ID" value="ABX01038.1"/>
    <property type="molecule type" value="Genomic_DNA"/>
</dbReference>
<dbReference type="SMR" id="A9A7B4"/>
<dbReference type="STRING" id="444158.MmarC6_0217"/>
<dbReference type="KEGG" id="mmx:MmarC6_0217"/>
<dbReference type="eggNOG" id="arCOG04186">
    <property type="taxonomic scope" value="Archaea"/>
</dbReference>
<dbReference type="HOGENOM" id="CLU_062507_1_0_2"/>
<dbReference type="OrthoDB" id="30639at2157"/>
<dbReference type="PhylomeDB" id="A9A7B4"/>
<dbReference type="GO" id="GO:1990904">
    <property type="term" value="C:ribonucleoprotein complex"/>
    <property type="evidence" value="ECO:0007669"/>
    <property type="project" value="UniProtKB-KW"/>
</dbReference>
<dbReference type="GO" id="GO:0005840">
    <property type="term" value="C:ribosome"/>
    <property type="evidence" value="ECO:0007669"/>
    <property type="project" value="UniProtKB-KW"/>
</dbReference>
<dbReference type="GO" id="GO:0003735">
    <property type="term" value="F:structural constituent of ribosome"/>
    <property type="evidence" value="ECO:0007669"/>
    <property type="project" value="InterPro"/>
</dbReference>
<dbReference type="GO" id="GO:0006412">
    <property type="term" value="P:translation"/>
    <property type="evidence" value="ECO:0007669"/>
    <property type="project" value="UniProtKB-UniRule"/>
</dbReference>
<dbReference type="HAMAP" id="MF_00359">
    <property type="entry name" value="Ribosomal_eS1"/>
    <property type="match status" value="1"/>
</dbReference>
<dbReference type="InterPro" id="IPR001593">
    <property type="entry name" value="Ribosomal_eS1"/>
</dbReference>
<dbReference type="InterPro" id="IPR030838">
    <property type="entry name" value="Ribosomal_eS1_arc"/>
</dbReference>
<dbReference type="InterPro" id="IPR018281">
    <property type="entry name" value="Ribosomal_eS1_CS"/>
</dbReference>
<dbReference type="NCBIfam" id="NF003142">
    <property type="entry name" value="PRK04057.1"/>
    <property type="match status" value="1"/>
</dbReference>
<dbReference type="PANTHER" id="PTHR11830">
    <property type="entry name" value="40S RIBOSOMAL PROTEIN S3A"/>
    <property type="match status" value="1"/>
</dbReference>
<dbReference type="Pfam" id="PF01015">
    <property type="entry name" value="Ribosomal_S3Ae"/>
    <property type="match status" value="1"/>
</dbReference>
<dbReference type="SMART" id="SM01397">
    <property type="entry name" value="Ribosomal_S3Ae"/>
    <property type="match status" value="1"/>
</dbReference>
<dbReference type="PROSITE" id="PS01191">
    <property type="entry name" value="RIBOSOMAL_S3AE"/>
    <property type="match status" value="1"/>
</dbReference>
<feature type="chain" id="PRO_1000120687" description="Small ribosomal subunit protein eS1">
    <location>
        <begin position="1"/>
        <end position="225"/>
    </location>
</feature>
<keyword id="KW-0687">Ribonucleoprotein</keyword>
<keyword id="KW-0689">Ribosomal protein</keyword>